<dbReference type="EMBL" id="CP000010">
    <property type="protein sequence ID" value="AAU47869.1"/>
    <property type="molecule type" value="Genomic_DNA"/>
</dbReference>
<dbReference type="RefSeq" id="WP_004199276.1">
    <property type="nucleotide sequence ID" value="NC_006348.1"/>
</dbReference>
<dbReference type="RefSeq" id="YP_104165.1">
    <property type="nucleotide sequence ID" value="NC_006348.1"/>
</dbReference>
<dbReference type="SMR" id="Q62GK6"/>
<dbReference type="GeneID" id="93061831"/>
<dbReference type="KEGG" id="bma:BMA2631"/>
<dbReference type="PATRIC" id="fig|243160.12.peg.2702"/>
<dbReference type="eggNOG" id="COG0088">
    <property type="taxonomic scope" value="Bacteria"/>
</dbReference>
<dbReference type="HOGENOM" id="CLU_041575_5_2_4"/>
<dbReference type="Proteomes" id="UP000006693">
    <property type="component" value="Chromosome 1"/>
</dbReference>
<dbReference type="GO" id="GO:1990904">
    <property type="term" value="C:ribonucleoprotein complex"/>
    <property type="evidence" value="ECO:0007669"/>
    <property type="project" value="UniProtKB-KW"/>
</dbReference>
<dbReference type="GO" id="GO:0005840">
    <property type="term" value="C:ribosome"/>
    <property type="evidence" value="ECO:0007669"/>
    <property type="project" value="UniProtKB-KW"/>
</dbReference>
<dbReference type="GO" id="GO:0019843">
    <property type="term" value="F:rRNA binding"/>
    <property type="evidence" value="ECO:0007669"/>
    <property type="project" value="UniProtKB-UniRule"/>
</dbReference>
<dbReference type="GO" id="GO:0003735">
    <property type="term" value="F:structural constituent of ribosome"/>
    <property type="evidence" value="ECO:0007669"/>
    <property type="project" value="InterPro"/>
</dbReference>
<dbReference type="GO" id="GO:0006412">
    <property type="term" value="P:translation"/>
    <property type="evidence" value="ECO:0007669"/>
    <property type="project" value="UniProtKB-UniRule"/>
</dbReference>
<dbReference type="Gene3D" id="3.40.1370.10">
    <property type="match status" value="1"/>
</dbReference>
<dbReference type="HAMAP" id="MF_01328_B">
    <property type="entry name" value="Ribosomal_uL4_B"/>
    <property type="match status" value="1"/>
</dbReference>
<dbReference type="InterPro" id="IPR002136">
    <property type="entry name" value="Ribosomal_uL4"/>
</dbReference>
<dbReference type="InterPro" id="IPR013005">
    <property type="entry name" value="Ribosomal_uL4-like"/>
</dbReference>
<dbReference type="InterPro" id="IPR023574">
    <property type="entry name" value="Ribosomal_uL4_dom_sf"/>
</dbReference>
<dbReference type="NCBIfam" id="TIGR03953">
    <property type="entry name" value="rplD_bact"/>
    <property type="match status" value="1"/>
</dbReference>
<dbReference type="PANTHER" id="PTHR10746">
    <property type="entry name" value="50S RIBOSOMAL PROTEIN L4"/>
    <property type="match status" value="1"/>
</dbReference>
<dbReference type="PANTHER" id="PTHR10746:SF6">
    <property type="entry name" value="LARGE RIBOSOMAL SUBUNIT PROTEIN UL4M"/>
    <property type="match status" value="1"/>
</dbReference>
<dbReference type="Pfam" id="PF00573">
    <property type="entry name" value="Ribosomal_L4"/>
    <property type="match status" value="1"/>
</dbReference>
<dbReference type="SUPFAM" id="SSF52166">
    <property type="entry name" value="Ribosomal protein L4"/>
    <property type="match status" value="1"/>
</dbReference>
<sequence length="206" mass="22866">MELKLLNSNGQEGAVVNASDVVFGRDYNEALIHQVVVAYQANARQGNRAQKDREQVKHTTKKPWRQKGTGRARAGMSSSPLWRGGGRIFPNSPDENFSHKVNKKMHRAGLCSIFSQLAREGRLSVVEDIVLEAPKTKLLADKFKAMGLDSVLVITDTVDENLYLASRNLPHVAVVEPRYADPLSLIYFKKVLVTKAAVAQIEELLS</sequence>
<comment type="function">
    <text evidence="1">One of the primary rRNA binding proteins, this protein initially binds near the 5'-end of the 23S rRNA. It is important during the early stages of 50S assembly. It makes multiple contacts with different domains of the 23S rRNA in the assembled 50S subunit and ribosome.</text>
</comment>
<comment type="function">
    <text evidence="1">Forms part of the polypeptide exit tunnel.</text>
</comment>
<comment type="subunit">
    <text evidence="1">Part of the 50S ribosomal subunit.</text>
</comment>
<comment type="similarity">
    <text evidence="1">Belongs to the universal ribosomal protein uL4 family.</text>
</comment>
<feature type="chain" id="PRO_0000242351" description="Large ribosomal subunit protein uL4">
    <location>
        <begin position="1"/>
        <end position="206"/>
    </location>
</feature>
<feature type="region of interest" description="Disordered" evidence="2">
    <location>
        <begin position="45"/>
        <end position="85"/>
    </location>
</feature>
<feature type="compositionally biased region" description="Basic residues" evidence="2">
    <location>
        <begin position="58"/>
        <end position="70"/>
    </location>
</feature>
<proteinExistence type="inferred from homology"/>
<keyword id="KW-1185">Reference proteome</keyword>
<keyword id="KW-0687">Ribonucleoprotein</keyword>
<keyword id="KW-0689">Ribosomal protein</keyword>
<keyword id="KW-0694">RNA-binding</keyword>
<keyword id="KW-0699">rRNA-binding</keyword>
<organism>
    <name type="scientific">Burkholderia mallei (strain ATCC 23344)</name>
    <dbReference type="NCBI Taxonomy" id="243160"/>
    <lineage>
        <taxon>Bacteria</taxon>
        <taxon>Pseudomonadati</taxon>
        <taxon>Pseudomonadota</taxon>
        <taxon>Betaproteobacteria</taxon>
        <taxon>Burkholderiales</taxon>
        <taxon>Burkholderiaceae</taxon>
        <taxon>Burkholderia</taxon>
        <taxon>pseudomallei group</taxon>
    </lineage>
</organism>
<name>RL4_BURMA</name>
<reference key="1">
    <citation type="journal article" date="2004" name="Proc. Natl. Acad. Sci. U.S.A.">
        <title>Structural flexibility in the Burkholderia mallei genome.</title>
        <authorList>
            <person name="Nierman W.C."/>
            <person name="DeShazer D."/>
            <person name="Kim H.S."/>
            <person name="Tettelin H."/>
            <person name="Nelson K.E."/>
            <person name="Feldblyum T.V."/>
            <person name="Ulrich R.L."/>
            <person name="Ronning C.M."/>
            <person name="Brinkac L.M."/>
            <person name="Daugherty S.C."/>
            <person name="Davidsen T.D."/>
            <person name="DeBoy R.T."/>
            <person name="Dimitrov G."/>
            <person name="Dodson R.J."/>
            <person name="Durkin A.S."/>
            <person name="Gwinn M.L."/>
            <person name="Haft D.H."/>
            <person name="Khouri H.M."/>
            <person name="Kolonay J.F."/>
            <person name="Madupu R."/>
            <person name="Mohammoud Y."/>
            <person name="Nelson W.C."/>
            <person name="Radune D."/>
            <person name="Romero C.M."/>
            <person name="Sarria S."/>
            <person name="Selengut J."/>
            <person name="Shamblin C."/>
            <person name="Sullivan S.A."/>
            <person name="White O."/>
            <person name="Yu Y."/>
            <person name="Zafar N."/>
            <person name="Zhou L."/>
            <person name="Fraser C.M."/>
        </authorList>
    </citation>
    <scope>NUCLEOTIDE SEQUENCE [LARGE SCALE GENOMIC DNA]</scope>
    <source>
        <strain>ATCC 23344</strain>
    </source>
</reference>
<gene>
    <name evidence="1" type="primary">rplD</name>
    <name type="ordered locus">BMA2631</name>
</gene>
<evidence type="ECO:0000255" key="1">
    <source>
        <dbReference type="HAMAP-Rule" id="MF_01328"/>
    </source>
</evidence>
<evidence type="ECO:0000256" key="2">
    <source>
        <dbReference type="SAM" id="MobiDB-lite"/>
    </source>
</evidence>
<evidence type="ECO:0000305" key="3"/>
<accession>Q62GK6</accession>
<protein>
    <recommendedName>
        <fullName evidence="1">Large ribosomal subunit protein uL4</fullName>
    </recommendedName>
    <alternativeName>
        <fullName evidence="3">50S ribosomal protein L4</fullName>
    </alternativeName>
</protein>